<proteinExistence type="inferred from homology"/>
<gene>
    <name evidence="1" type="primary">glnR</name>
    <name type="ordered locus">BA_3834</name>
    <name type="ordered locus">GBAA_3834</name>
    <name type="ordered locus">BAS3550</name>
</gene>
<sequence length="129" mass="15173">MKEDRRSAPLFPIGIVMDLTQLSARQIRYYEEHNLVSPTRTKGNRRLFSFNDVDKLLEIKDLLDQGLNMAGIKQVLLMKENQTEAVKVKEETKEISKTELRKILRDELQHTGRFNRTSLRQGDISRFFH</sequence>
<accession>P62172</accession>
<accession>P19083</accession>
<accession>Q6HV34</accession>
<accession>Q6KPA8</accession>
<organism>
    <name type="scientific">Bacillus anthracis</name>
    <dbReference type="NCBI Taxonomy" id="1392"/>
    <lineage>
        <taxon>Bacteria</taxon>
        <taxon>Bacillati</taxon>
        <taxon>Bacillota</taxon>
        <taxon>Bacilli</taxon>
        <taxon>Bacillales</taxon>
        <taxon>Bacillaceae</taxon>
        <taxon>Bacillus</taxon>
        <taxon>Bacillus cereus group</taxon>
    </lineage>
</organism>
<evidence type="ECO:0000250" key="1">
    <source>
        <dbReference type="UniProtKB" id="P37582"/>
    </source>
</evidence>
<evidence type="ECO:0000255" key="2">
    <source>
        <dbReference type="PROSITE-ProRule" id="PRU00254"/>
    </source>
</evidence>
<name>GLNR_BACAN</name>
<feature type="chain" id="PRO_0000098119" description="HTH-type transcriptional regulator GlnR">
    <location>
        <begin position="1"/>
        <end position="129"/>
    </location>
</feature>
<feature type="domain" description="HTH merR-type" evidence="2">
    <location>
        <begin position="10"/>
        <end position="78"/>
    </location>
</feature>
<feature type="DNA-binding region" description="H-T-H motif" evidence="2">
    <location>
        <begin position="13"/>
        <end position="32"/>
    </location>
</feature>
<reference key="1">
    <citation type="journal article" date="2003" name="Nature">
        <title>The genome sequence of Bacillus anthracis Ames and comparison to closely related bacteria.</title>
        <authorList>
            <person name="Read T.D."/>
            <person name="Peterson S.N."/>
            <person name="Tourasse N.J."/>
            <person name="Baillie L.W."/>
            <person name="Paulsen I.T."/>
            <person name="Nelson K.E."/>
            <person name="Tettelin H."/>
            <person name="Fouts D.E."/>
            <person name="Eisen J.A."/>
            <person name="Gill S.R."/>
            <person name="Holtzapple E.K."/>
            <person name="Okstad O.A."/>
            <person name="Helgason E."/>
            <person name="Rilstone J."/>
            <person name="Wu M."/>
            <person name="Kolonay J.F."/>
            <person name="Beanan M.J."/>
            <person name="Dodson R.J."/>
            <person name="Brinkac L.M."/>
            <person name="Gwinn M.L."/>
            <person name="DeBoy R.T."/>
            <person name="Madpu R."/>
            <person name="Daugherty S.C."/>
            <person name="Durkin A.S."/>
            <person name="Haft D.H."/>
            <person name="Nelson W.C."/>
            <person name="Peterson J.D."/>
            <person name="Pop M."/>
            <person name="Khouri H.M."/>
            <person name="Radune D."/>
            <person name="Benton J.L."/>
            <person name="Mahamoud Y."/>
            <person name="Jiang L."/>
            <person name="Hance I.R."/>
            <person name="Weidman J.F."/>
            <person name="Berry K.J."/>
            <person name="Plaut R.D."/>
            <person name="Wolf A.M."/>
            <person name="Watkins K.L."/>
            <person name="Nierman W.C."/>
            <person name="Hazen A."/>
            <person name="Cline R.T."/>
            <person name="Redmond C."/>
            <person name="Thwaite J.E."/>
            <person name="White O."/>
            <person name="Salzberg S.L."/>
            <person name="Thomason B."/>
            <person name="Friedlander A.M."/>
            <person name="Koehler T.M."/>
            <person name="Hanna P.C."/>
            <person name="Kolstoe A.-B."/>
            <person name="Fraser C.M."/>
        </authorList>
    </citation>
    <scope>NUCLEOTIDE SEQUENCE [LARGE SCALE GENOMIC DNA]</scope>
    <source>
        <strain>Ames / isolate Porton</strain>
    </source>
</reference>
<reference key="2">
    <citation type="journal article" date="2009" name="J. Bacteriol.">
        <title>The complete genome sequence of Bacillus anthracis Ames 'Ancestor'.</title>
        <authorList>
            <person name="Ravel J."/>
            <person name="Jiang L."/>
            <person name="Stanley S.T."/>
            <person name="Wilson M.R."/>
            <person name="Decker R.S."/>
            <person name="Read T.D."/>
            <person name="Worsham P."/>
            <person name="Keim P.S."/>
            <person name="Salzberg S.L."/>
            <person name="Fraser-Liggett C.M."/>
            <person name="Rasko D.A."/>
        </authorList>
    </citation>
    <scope>NUCLEOTIDE SEQUENCE [LARGE SCALE GENOMIC DNA]</scope>
    <source>
        <strain>Ames ancestor</strain>
    </source>
</reference>
<reference key="3">
    <citation type="submission" date="2004-01" db="EMBL/GenBank/DDBJ databases">
        <title>Complete genome sequence of Bacillus anthracis Sterne.</title>
        <authorList>
            <person name="Brettin T.S."/>
            <person name="Bruce D."/>
            <person name="Challacombe J.F."/>
            <person name="Gilna P."/>
            <person name="Han C."/>
            <person name="Hill K."/>
            <person name="Hitchcock P."/>
            <person name="Jackson P."/>
            <person name="Keim P."/>
            <person name="Longmire J."/>
            <person name="Lucas S."/>
            <person name="Okinaka R."/>
            <person name="Richardson P."/>
            <person name="Rubin E."/>
            <person name="Tice H."/>
        </authorList>
    </citation>
    <scope>NUCLEOTIDE SEQUENCE [LARGE SCALE GENOMIC DNA]</scope>
    <source>
        <strain>Sterne</strain>
    </source>
</reference>
<dbReference type="EMBL" id="AE016879">
    <property type="protein sequence ID" value="AAP27571.1"/>
    <property type="molecule type" value="Genomic_DNA"/>
</dbReference>
<dbReference type="EMBL" id="AE017334">
    <property type="protein sequence ID" value="AAT32943.1"/>
    <property type="molecule type" value="Genomic_DNA"/>
</dbReference>
<dbReference type="EMBL" id="AE017225">
    <property type="protein sequence ID" value="AAT55855.1"/>
    <property type="molecule type" value="Genomic_DNA"/>
</dbReference>
<dbReference type="RefSeq" id="NP_846085.1">
    <property type="nucleotide sequence ID" value="NC_003997.3"/>
</dbReference>
<dbReference type="RefSeq" id="WP_000656783.1">
    <property type="nucleotide sequence ID" value="NZ_WXXJ01000001.1"/>
</dbReference>
<dbReference type="RefSeq" id="YP_029804.1">
    <property type="nucleotide sequence ID" value="NC_005945.1"/>
</dbReference>
<dbReference type="SMR" id="P62172"/>
<dbReference type="STRING" id="261594.GBAA_3834"/>
<dbReference type="DNASU" id="1084985"/>
<dbReference type="GeneID" id="87591128"/>
<dbReference type="KEGG" id="ban:BA_3834"/>
<dbReference type="KEGG" id="bar:GBAA_3834"/>
<dbReference type="KEGG" id="bat:BAS3550"/>
<dbReference type="PATRIC" id="fig|198094.11.peg.3802"/>
<dbReference type="eggNOG" id="COG0789">
    <property type="taxonomic scope" value="Bacteria"/>
</dbReference>
<dbReference type="HOGENOM" id="CLU_060077_9_0_9"/>
<dbReference type="OMA" id="SIVMQLT"/>
<dbReference type="OrthoDB" id="9806513at2"/>
<dbReference type="Proteomes" id="UP000000427">
    <property type="component" value="Chromosome"/>
</dbReference>
<dbReference type="Proteomes" id="UP000000594">
    <property type="component" value="Chromosome"/>
</dbReference>
<dbReference type="GO" id="GO:0003677">
    <property type="term" value="F:DNA binding"/>
    <property type="evidence" value="ECO:0007669"/>
    <property type="project" value="UniProtKB-KW"/>
</dbReference>
<dbReference type="GO" id="GO:0003700">
    <property type="term" value="F:DNA-binding transcription factor activity"/>
    <property type="evidence" value="ECO:0007669"/>
    <property type="project" value="InterPro"/>
</dbReference>
<dbReference type="CDD" id="cd01105">
    <property type="entry name" value="HTH_GlnR-like"/>
    <property type="match status" value="1"/>
</dbReference>
<dbReference type="FunFam" id="1.10.1660.10:FF:000005">
    <property type="entry name" value="MerR family transcriptional regulator"/>
    <property type="match status" value="1"/>
</dbReference>
<dbReference type="Gene3D" id="1.10.1660.10">
    <property type="match status" value="1"/>
</dbReference>
<dbReference type="InterPro" id="IPR009061">
    <property type="entry name" value="DNA-bd_dom_put_sf"/>
</dbReference>
<dbReference type="InterPro" id="IPR000551">
    <property type="entry name" value="MerR-type_HTH_dom"/>
</dbReference>
<dbReference type="InterPro" id="IPR047057">
    <property type="entry name" value="MerR_fam"/>
</dbReference>
<dbReference type="PANTHER" id="PTHR30204:SF65">
    <property type="entry name" value="HTH-TYPE TRANSCRIPTIONAL REGULATOR TNRA"/>
    <property type="match status" value="1"/>
</dbReference>
<dbReference type="PANTHER" id="PTHR30204">
    <property type="entry name" value="REDOX-CYCLING DRUG-SENSING TRANSCRIPTIONAL ACTIVATOR SOXR"/>
    <property type="match status" value="1"/>
</dbReference>
<dbReference type="Pfam" id="PF13411">
    <property type="entry name" value="MerR_1"/>
    <property type="match status" value="1"/>
</dbReference>
<dbReference type="SMART" id="SM00422">
    <property type="entry name" value="HTH_MERR"/>
    <property type="match status" value="1"/>
</dbReference>
<dbReference type="SUPFAM" id="SSF46955">
    <property type="entry name" value="Putative DNA-binding domain"/>
    <property type="match status" value="1"/>
</dbReference>
<dbReference type="PROSITE" id="PS00552">
    <property type="entry name" value="HTH_MERR_1"/>
    <property type="match status" value="1"/>
</dbReference>
<dbReference type="PROSITE" id="PS50937">
    <property type="entry name" value="HTH_MERR_2"/>
    <property type="match status" value="1"/>
</dbReference>
<protein>
    <recommendedName>
        <fullName evidence="1">HTH-type transcriptional regulator GlnR</fullName>
    </recommendedName>
</protein>
<keyword id="KW-0238">DNA-binding</keyword>
<keyword id="KW-1185">Reference proteome</keyword>
<keyword id="KW-0678">Repressor</keyword>
<keyword id="KW-0804">Transcription</keyword>
<keyword id="KW-0805">Transcription regulation</keyword>
<comment type="function">
    <text evidence="1">Transcription repressor during nitrogen excess. On the contrary of the MerR members, which require longer DNA sites for high-affinity binding, GlnR requires a DNA sequence of 17 nucleotides as minimal binding site.</text>
</comment>
<comment type="activity regulation">
    <text evidence="1">Under conditions of nitrogen excess, the DNA binding activity of GlnR is activated by a transient interaction with feedback-inhibited GlnA. Under conditions of nitrogen-limited, GlnR is autoinhibited by its C-terminal region.</text>
</comment>
<comment type="subunit">
    <text evidence="1">Homodimer under conditions of nitrogen excess. Monomer under conditions of nitrogen-limited. Interacts with feedback-inhibited GlnA in order to stabilizes GlnR-DNA complex.</text>
</comment>
<comment type="induction">
    <text evidence="1">Under conditions of nitrogen-limited growth, repressed by TnrA.</text>
</comment>
<comment type="miscellaneous">
    <text evidence="1">The amino acid sequences of the N-terminal DNA binding domains of TnrA and GlnR are highly similar, and both proteins bind to DNA sequences with a common consensus sequence. In contrast, the C-terminal signal transduction domains of TnrA and GlnR have no homology.</text>
</comment>